<accession>Q3AMW4</accession>
<sequence>MSGWPHRHVLDLASFSREDFAAVLELAQRFRSLPITGARKLPALQGRLVATLFFEPSTRTRSSFELAAKRLSADVMSFSPSSSSLSKGESVLDTARTYVAMGADVLVVRHRSTGVPQQLAHDLQQMGERTVVLNGGDGLHSHPSQGLLDLLTLARFFSPRHPMPEALQGRRIVIVGDILHSRVARSNLWALSACGADVVLCGPPSLVPDDFAAFVDAPPPGLPEDPVPQRGKVSVVRRLEHALPGADAVMTLRLQKERMGQQLLTSLERYHRDFGLSHERMQLCGQNVPVLHPGPVNRGVELSGSLLDDPRCSLVEEQVRNGVPTRMALLYLMAASESAAEASLVSSSS</sequence>
<organism>
    <name type="scientific">Synechococcus sp. (strain CC9605)</name>
    <dbReference type="NCBI Taxonomy" id="110662"/>
    <lineage>
        <taxon>Bacteria</taxon>
        <taxon>Bacillati</taxon>
        <taxon>Cyanobacteriota</taxon>
        <taxon>Cyanophyceae</taxon>
        <taxon>Synechococcales</taxon>
        <taxon>Synechococcaceae</taxon>
        <taxon>Synechococcus</taxon>
    </lineage>
</organism>
<name>PYRB_SYNSC</name>
<protein>
    <recommendedName>
        <fullName evidence="1">Aspartate carbamoyltransferase catalytic subunit</fullName>
        <ecNumber evidence="1">2.1.3.2</ecNumber>
    </recommendedName>
    <alternativeName>
        <fullName evidence="1">Aspartate transcarbamylase</fullName>
        <shortName evidence="1">ATCase</shortName>
    </alternativeName>
</protein>
<evidence type="ECO:0000255" key="1">
    <source>
        <dbReference type="HAMAP-Rule" id="MF_00001"/>
    </source>
</evidence>
<keyword id="KW-0665">Pyrimidine biosynthesis</keyword>
<keyword id="KW-0808">Transferase</keyword>
<comment type="function">
    <text evidence="1">Catalyzes the condensation of carbamoyl phosphate and aspartate to form carbamoyl aspartate and inorganic phosphate, the committed step in the de novo pyrimidine nucleotide biosynthesis pathway.</text>
</comment>
<comment type="catalytic activity">
    <reaction evidence="1">
        <text>carbamoyl phosphate + L-aspartate = N-carbamoyl-L-aspartate + phosphate + H(+)</text>
        <dbReference type="Rhea" id="RHEA:20013"/>
        <dbReference type="ChEBI" id="CHEBI:15378"/>
        <dbReference type="ChEBI" id="CHEBI:29991"/>
        <dbReference type="ChEBI" id="CHEBI:32814"/>
        <dbReference type="ChEBI" id="CHEBI:43474"/>
        <dbReference type="ChEBI" id="CHEBI:58228"/>
        <dbReference type="EC" id="2.1.3.2"/>
    </reaction>
</comment>
<comment type="pathway">
    <text evidence="1">Pyrimidine metabolism; UMP biosynthesis via de novo pathway; (S)-dihydroorotate from bicarbonate: step 2/3.</text>
</comment>
<comment type="subunit">
    <text evidence="1">Heterododecamer (2C3:3R2) of six catalytic PyrB chains organized as two trimers (C3), and six regulatory PyrI chains organized as three dimers (R2).</text>
</comment>
<comment type="similarity">
    <text evidence="1">Belongs to the aspartate/ornithine carbamoyltransferase superfamily. ATCase family.</text>
</comment>
<feature type="chain" id="PRO_0000321169" description="Aspartate carbamoyltransferase catalytic subunit">
    <location>
        <begin position="1"/>
        <end position="349"/>
    </location>
</feature>
<feature type="binding site" evidence="1">
    <location>
        <position position="59"/>
    </location>
    <ligand>
        <name>carbamoyl phosphate</name>
        <dbReference type="ChEBI" id="CHEBI:58228"/>
    </ligand>
</feature>
<feature type="binding site" evidence="1">
    <location>
        <position position="60"/>
    </location>
    <ligand>
        <name>carbamoyl phosphate</name>
        <dbReference type="ChEBI" id="CHEBI:58228"/>
    </ligand>
</feature>
<feature type="binding site" evidence="1">
    <location>
        <position position="87"/>
    </location>
    <ligand>
        <name>L-aspartate</name>
        <dbReference type="ChEBI" id="CHEBI:29991"/>
    </ligand>
</feature>
<feature type="binding site" evidence="1">
    <location>
        <position position="109"/>
    </location>
    <ligand>
        <name>carbamoyl phosphate</name>
        <dbReference type="ChEBI" id="CHEBI:58228"/>
    </ligand>
</feature>
<feature type="binding site" evidence="1">
    <location>
        <position position="142"/>
    </location>
    <ligand>
        <name>carbamoyl phosphate</name>
        <dbReference type="ChEBI" id="CHEBI:58228"/>
    </ligand>
</feature>
<feature type="binding site" evidence="1">
    <location>
        <position position="145"/>
    </location>
    <ligand>
        <name>carbamoyl phosphate</name>
        <dbReference type="ChEBI" id="CHEBI:58228"/>
    </ligand>
</feature>
<feature type="binding site" evidence="1">
    <location>
        <position position="182"/>
    </location>
    <ligand>
        <name>L-aspartate</name>
        <dbReference type="ChEBI" id="CHEBI:29991"/>
    </ligand>
</feature>
<feature type="binding site" evidence="1">
    <location>
        <position position="253"/>
    </location>
    <ligand>
        <name>L-aspartate</name>
        <dbReference type="ChEBI" id="CHEBI:29991"/>
    </ligand>
</feature>
<feature type="binding site" evidence="1">
    <location>
        <position position="294"/>
    </location>
    <ligand>
        <name>carbamoyl phosphate</name>
        <dbReference type="ChEBI" id="CHEBI:58228"/>
    </ligand>
</feature>
<feature type="binding site" evidence="1">
    <location>
        <position position="295"/>
    </location>
    <ligand>
        <name>carbamoyl phosphate</name>
        <dbReference type="ChEBI" id="CHEBI:58228"/>
    </ligand>
</feature>
<reference key="1">
    <citation type="submission" date="2005-07" db="EMBL/GenBank/DDBJ databases">
        <title>Complete sequence of Synechococcus sp. CC9605.</title>
        <authorList>
            <consortium name="US DOE Joint Genome Institute"/>
            <person name="Copeland A."/>
            <person name="Lucas S."/>
            <person name="Lapidus A."/>
            <person name="Barry K."/>
            <person name="Detter J.C."/>
            <person name="Glavina T."/>
            <person name="Hammon N."/>
            <person name="Israni S."/>
            <person name="Pitluck S."/>
            <person name="Schmutz J."/>
            <person name="Martinez M."/>
            <person name="Larimer F."/>
            <person name="Land M."/>
            <person name="Kyrpides N."/>
            <person name="Ivanova N."/>
            <person name="Richardson P."/>
        </authorList>
    </citation>
    <scope>NUCLEOTIDE SEQUENCE [LARGE SCALE GENOMIC DNA]</scope>
    <source>
        <strain>CC9605</strain>
    </source>
</reference>
<proteinExistence type="inferred from homology"/>
<dbReference type="EC" id="2.1.3.2" evidence="1"/>
<dbReference type="EMBL" id="CP000110">
    <property type="protein sequence ID" value="ABB34068.1"/>
    <property type="molecule type" value="Genomic_DNA"/>
</dbReference>
<dbReference type="RefSeq" id="WP_011363320.1">
    <property type="nucleotide sequence ID" value="NC_007516.1"/>
</dbReference>
<dbReference type="SMR" id="Q3AMW4"/>
<dbReference type="STRING" id="110662.Syncc9605_0292"/>
<dbReference type="KEGG" id="syd:Syncc9605_0292"/>
<dbReference type="eggNOG" id="COG0540">
    <property type="taxonomic scope" value="Bacteria"/>
</dbReference>
<dbReference type="HOGENOM" id="CLU_043846_2_0_3"/>
<dbReference type="OrthoDB" id="9774690at2"/>
<dbReference type="UniPathway" id="UPA00070">
    <property type="reaction ID" value="UER00116"/>
</dbReference>
<dbReference type="GO" id="GO:0005829">
    <property type="term" value="C:cytosol"/>
    <property type="evidence" value="ECO:0007669"/>
    <property type="project" value="TreeGrafter"/>
</dbReference>
<dbReference type="GO" id="GO:0016597">
    <property type="term" value="F:amino acid binding"/>
    <property type="evidence" value="ECO:0007669"/>
    <property type="project" value="InterPro"/>
</dbReference>
<dbReference type="GO" id="GO:0004070">
    <property type="term" value="F:aspartate carbamoyltransferase activity"/>
    <property type="evidence" value="ECO:0007669"/>
    <property type="project" value="UniProtKB-UniRule"/>
</dbReference>
<dbReference type="GO" id="GO:0006207">
    <property type="term" value="P:'de novo' pyrimidine nucleobase biosynthetic process"/>
    <property type="evidence" value="ECO:0007669"/>
    <property type="project" value="InterPro"/>
</dbReference>
<dbReference type="GO" id="GO:0044205">
    <property type="term" value="P:'de novo' UMP biosynthetic process"/>
    <property type="evidence" value="ECO:0007669"/>
    <property type="project" value="UniProtKB-UniRule"/>
</dbReference>
<dbReference type="GO" id="GO:0006520">
    <property type="term" value="P:amino acid metabolic process"/>
    <property type="evidence" value="ECO:0007669"/>
    <property type="project" value="InterPro"/>
</dbReference>
<dbReference type="Gene3D" id="3.40.50.1370">
    <property type="entry name" value="Aspartate/ornithine carbamoyltransferase"/>
    <property type="match status" value="2"/>
</dbReference>
<dbReference type="HAMAP" id="MF_00001">
    <property type="entry name" value="Asp_carb_tr"/>
    <property type="match status" value="1"/>
</dbReference>
<dbReference type="InterPro" id="IPR006132">
    <property type="entry name" value="Asp/Orn_carbamoyltranf_P-bd"/>
</dbReference>
<dbReference type="InterPro" id="IPR006130">
    <property type="entry name" value="Asp/Orn_carbamoylTrfase"/>
</dbReference>
<dbReference type="InterPro" id="IPR036901">
    <property type="entry name" value="Asp/Orn_carbamoylTrfase_sf"/>
</dbReference>
<dbReference type="InterPro" id="IPR002082">
    <property type="entry name" value="Asp_carbamoyltransf"/>
</dbReference>
<dbReference type="InterPro" id="IPR006131">
    <property type="entry name" value="Asp_carbamoyltransf_Asp/Orn-bd"/>
</dbReference>
<dbReference type="NCBIfam" id="TIGR00670">
    <property type="entry name" value="asp_carb_tr"/>
    <property type="match status" value="1"/>
</dbReference>
<dbReference type="NCBIfam" id="NF002032">
    <property type="entry name" value="PRK00856.1"/>
    <property type="match status" value="1"/>
</dbReference>
<dbReference type="PANTHER" id="PTHR45753:SF6">
    <property type="entry name" value="ASPARTATE CARBAMOYLTRANSFERASE"/>
    <property type="match status" value="1"/>
</dbReference>
<dbReference type="PANTHER" id="PTHR45753">
    <property type="entry name" value="ORNITHINE CARBAMOYLTRANSFERASE, MITOCHONDRIAL"/>
    <property type="match status" value="1"/>
</dbReference>
<dbReference type="Pfam" id="PF00185">
    <property type="entry name" value="OTCace"/>
    <property type="match status" value="1"/>
</dbReference>
<dbReference type="Pfam" id="PF02729">
    <property type="entry name" value="OTCace_N"/>
    <property type="match status" value="1"/>
</dbReference>
<dbReference type="PRINTS" id="PR00100">
    <property type="entry name" value="AOTCASE"/>
</dbReference>
<dbReference type="PRINTS" id="PR00101">
    <property type="entry name" value="ATCASE"/>
</dbReference>
<dbReference type="SUPFAM" id="SSF53671">
    <property type="entry name" value="Aspartate/ornithine carbamoyltransferase"/>
    <property type="match status" value="1"/>
</dbReference>
<dbReference type="PROSITE" id="PS00097">
    <property type="entry name" value="CARBAMOYLTRANSFERASE"/>
    <property type="match status" value="1"/>
</dbReference>
<gene>
    <name evidence="1" type="primary">pyrB</name>
    <name type="ordered locus">Syncc9605_0292</name>
</gene>